<name>ISPH_CERS4</name>
<keyword id="KW-0004">4Fe-4S</keyword>
<keyword id="KW-0408">Iron</keyword>
<keyword id="KW-0411">Iron-sulfur</keyword>
<keyword id="KW-0414">Isoprene biosynthesis</keyword>
<keyword id="KW-0479">Metal-binding</keyword>
<keyword id="KW-0560">Oxidoreductase</keyword>
<keyword id="KW-1185">Reference proteome</keyword>
<evidence type="ECO:0000255" key="1">
    <source>
        <dbReference type="HAMAP-Rule" id="MF_00191"/>
    </source>
</evidence>
<sequence length="319" mass="34661">MTMPPLTLYLAAPRGFCAGVDRAIKIVEMALEKWGAPVYVRHEIVHNKFVVDRLRDMGAVFVEELDEAPTDRPVIFSAHGVPKAIPAEAERRNMVYVDATCPLVSKVHLEAERHHENGLQMIMIGHAGHPETVGTMGQLPEGEVLLVETVEDVAGLEVRDPERLAYITQTTLSIDDTAAIVAALRERFPAIAIPRKEDICYATTNRQGAVKAIAGRIDALLVIGAPNSSNSKRLVEVGRAAGCRVAQLVQRATDIDWEALQGATAVGVAAGASAPEVLVDEVIAAFRARFDTTVEAVETVKERVEFKVPRILREPAETP</sequence>
<comment type="function">
    <text evidence="1">Catalyzes the conversion of 1-hydroxy-2-methyl-2-(E)-butenyl 4-diphosphate (HMBPP) into a mixture of isopentenyl diphosphate (IPP) and dimethylallyl diphosphate (DMAPP). Acts in the terminal step of the DOXP/MEP pathway for isoprenoid precursor biosynthesis.</text>
</comment>
<comment type="catalytic activity">
    <reaction evidence="1">
        <text>isopentenyl diphosphate + 2 oxidized [2Fe-2S]-[ferredoxin] + H2O = (2E)-4-hydroxy-3-methylbut-2-enyl diphosphate + 2 reduced [2Fe-2S]-[ferredoxin] + 2 H(+)</text>
        <dbReference type="Rhea" id="RHEA:24488"/>
        <dbReference type="Rhea" id="RHEA-COMP:10000"/>
        <dbReference type="Rhea" id="RHEA-COMP:10001"/>
        <dbReference type="ChEBI" id="CHEBI:15377"/>
        <dbReference type="ChEBI" id="CHEBI:15378"/>
        <dbReference type="ChEBI" id="CHEBI:33737"/>
        <dbReference type="ChEBI" id="CHEBI:33738"/>
        <dbReference type="ChEBI" id="CHEBI:128753"/>
        <dbReference type="ChEBI" id="CHEBI:128769"/>
        <dbReference type="EC" id="1.17.7.4"/>
    </reaction>
</comment>
<comment type="catalytic activity">
    <reaction evidence="1">
        <text>dimethylallyl diphosphate + 2 oxidized [2Fe-2S]-[ferredoxin] + H2O = (2E)-4-hydroxy-3-methylbut-2-enyl diphosphate + 2 reduced [2Fe-2S]-[ferredoxin] + 2 H(+)</text>
        <dbReference type="Rhea" id="RHEA:24825"/>
        <dbReference type="Rhea" id="RHEA-COMP:10000"/>
        <dbReference type="Rhea" id="RHEA-COMP:10001"/>
        <dbReference type="ChEBI" id="CHEBI:15377"/>
        <dbReference type="ChEBI" id="CHEBI:15378"/>
        <dbReference type="ChEBI" id="CHEBI:33737"/>
        <dbReference type="ChEBI" id="CHEBI:33738"/>
        <dbReference type="ChEBI" id="CHEBI:57623"/>
        <dbReference type="ChEBI" id="CHEBI:128753"/>
        <dbReference type="EC" id="1.17.7.4"/>
    </reaction>
</comment>
<comment type="cofactor">
    <cofactor evidence="1">
        <name>[4Fe-4S] cluster</name>
        <dbReference type="ChEBI" id="CHEBI:49883"/>
    </cofactor>
    <text evidence="1">Binds 1 [4Fe-4S] cluster per subunit.</text>
</comment>
<comment type="pathway">
    <text evidence="1">Isoprenoid biosynthesis; dimethylallyl diphosphate biosynthesis; dimethylallyl diphosphate from (2E)-4-hydroxy-3-methylbutenyl diphosphate: step 1/1.</text>
</comment>
<comment type="pathway">
    <text evidence="1">Isoprenoid biosynthesis; isopentenyl diphosphate biosynthesis via DXP pathway; isopentenyl diphosphate from 1-deoxy-D-xylulose 5-phosphate: step 6/6.</text>
</comment>
<comment type="similarity">
    <text evidence="1">Belongs to the IspH family.</text>
</comment>
<gene>
    <name evidence="1" type="primary">ispH</name>
    <name type="ordered locus">RHOS4_02460</name>
    <name type="ORF">RSP_1666</name>
</gene>
<protein>
    <recommendedName>
        <fullName evidence="1">4-hydroxy-3-methylbut-2-enyl diphosphate reductase</fullName>
        <shortName evidence="1">HMBPP reductase</shortName>
        <ecNumber evidence="1">1.17.7.4</ecNumber>
    </recommendedName>
</protein>
<accession>Q3J5X0</accession>
<proteinExistence type="inferred from homology"/>
<feature type="chain" id="PRO_1000021171" description="4-hydroxy-3-methylbut-2-enyl diphosphate reductase">
    <location>
        <begin position="1"/>
        <end position="319"/>
    </location>
</feature>
<feature type="active site" description="Proton donor" evidence="1">
    <location>
        <position position="131"/>
    </location>
</feature>
<feature type="binding site" evidence="1">
    <location>
        <position position="17"/>
    </location>
    <ligand>
        <name>[4Fe-4S] cluster</name>
        <dbReference type="ChEBI" id="CHEBI:49883"/>
    </ligand>
</feature>
<feature type="binding site" evidence="1">
    <location>
        <position position="46"/>
    </location>
    <ligand>
        <name>(2E)-4-hydroxy-3-methylbut-2-enyl diphosphate</name>
        <dbReference type="ChEBI" id="CHEBI:128753"/>
    </ligand>
</feature>
<feature type="binding site" evidence="1">
    <location>
        <position position="46"/>
    </location>
    <ligand>
        <name>dimethylallyl diphosphate</name>
        <dbReference type="ChEBI" id="CHEBI:57623"/>
    </ligand>
</feature>
<feature type="binding site" evidence="1">
    <location>
        <position position="46"/>
    </location>
    <ligand>
        <name>isopentenyl diphosphate</name>
        <dbReference type="ChEBI" id="CHEBI:128769"/>
    </ligand>
</feature>
<feature type="binding site" evidence="1">
    <location>
        <position position="79"/>
    </location>
    <ligand>
        <name>(2E)-4-hydroxy-3-methylbut-2-enyl diphosphate</name>
        <dbReference type="ChEBI" id="CHEBI:128753"/>
    </ligand>
</feature>
<feature type="binding site" evidence="1">
    <location>
        <position position="79"/>
    </location>
    <ligand>
        <name>dimethylallyl diphosphate</name>
        <dbReference type="ChEBI" id="CHEBI:57623"/>
    </ligand>
</feature>
<feature type="binding site" evidence="1">
    <location>
        <position position="79"/>
    </location>
    <ligand>
        <name>isopentenyl diphosphate</name>
        <dbReference type="ChEBI" id="CHEBI:128769"/>
    </ligand>
</feature>
<feature type="binding site" evidence="1">
    <location>
        <position position="101"/>
    </location>
    <ligand>
        <name>[4Fe-4S] cluster</name>
        <dbReference type="ChEBI" id="CHEBI:49883"/>
    </ligand>
</feature>
<feature type="binding site" evidence="1">
    <location>
        <position position="129"/>
    </location>
    <ligand>
        <name>(2E)-4-hydroxy-3-methylbut-2-enyl diphosphate</name>
        <dbReference type="ChEBI" id="CHEBI:128753"/>
    </ligand>
</feature>
<feature type="binding site" evidence="1">
    <location>
        <position position="129"/>
    </location>
    <ligand>
        <name>dimethylallyl diphosphate</name>
        <dbReference type="ChEBI" id="CHEBI:57623"/>
    </ligand>
</feature>
<feature type="binding site" evidence="1">
    <location>
        <position position="129"/>
    </location>
    <ligand>
        <name>isopentenyl diphosphate</name>
        <dbReference type="ChEBI" id="CHEBI:128769"/>
    </ligand>
</feature>
<feature type="binding site" evidence="1">
    <location>
        <position position="170"/>
    </location>
    <ligand>
        <name>(2E)-4-hydroxy-3-methylbut-2-enyl diphosphate</name>
        <dbReference type="ChEBI" id="CHEBI:128753"/>
    </ligand>
</feature>
<feature type="binding site" evidence="1">
    <location>
        <position position="200"/>
    </location>
    <ligand>
        <name>[4Fe-4S] cluster</name>
        <dbReference type="ChEBI" id="CHEBI:49883"/>
    </ligand>
</feature>
<feature type="binding site" evidence="1">
    <location>
        <position position="228"/>
    </location>
    <ligand>
        <name>(2E)-4-hydroxy-3-methylbut-2-enyl diphosphate</name>
        <dbReference type="ChEBI" id="CHEBI:128753"/>
    </ligand>
</feature>
<feature type="binding site" evidence="1">
    <location>
        <position position="228"/>
    </location>
    <ligand>
        <name>dimethylallyl diphosphate</name>
        <dbReference type="ChEBI" id="CHEBI:57623"/>
    </ligand>
</feature>
<feature type="binding site" evidence="1">
    <location>
        <position position="228"/>
    </location>
    <ligand>
        <name>isopentenyl diphosphate</name>
        <dbReference type="ChEBI" id="CHEBI:128769"/>
    </ligand>
</feature>
<feature type="binding site" evidence="1">
    <location>
        <position position="229"/>
    </location>
    <ligand>
        <name>(2E)-4-hydroxy-3-methylbut-2-enyl diphosphate</name>
        <dbReference type="ChEBI" id="CHEBI:128753"/>
    </ligand>
</feature>
<feature type="binding site" evidence="1">
    <location>
        <position position="229"/>
    </location>
    <ligand>
        <name>dimethylallyl diphosphate</name>
        <dbReference type="ChEBI" id="CHEBI:57623"/>
    </ligand>
</feature>
<feature type="binding site" evidence="1">
    <location>
        <position position="229"/>
    </location>
    <ligand>
        <name>isopentenyl diphosphate</name>
        <dbReference type="ChEBI" id="CHEBI:128769"/>
    </ligand>
</feature>
<feature type="binding site" evidence="1">
    <location>
        <position position="230"/>
    </location>
    <ligand>
        <name>(2E)-4-hydroxy-3-methylbut-2-enyl diphosphate</name>
        <dbReference type="ChEBI" id="CHEBI:128753"/>
    </ligand>
</feature>
<feature type="binding site" evidence="1">
    <location>
        <position position="230"/>
    </location>
    <ligand>
        <name>dimethylallyl diphosphate</name>
        <dbReference type="ChEBI" id="CHEBI:57623"/>
    </ligand>
</feature>
<feature type="binding site" evidence="1">
    <location>
        <position position="230"/>
    </location>
    <ligand>
        <name>isopentenyl diphosphate</name>
        <dbReference type="ChEBI" id="CHEBI:128769"/>
    </ligand>
</feature>
<feature type="binding site" evidence="1">
    <location>
        <position position="273"/>
    </location>
    <ligand>
        <name>(2E)-4-hydroxy-3-methylbut-2-enyl diphosphate</name>
        <dbReference type="ChEBI" id="CHEBI:128753"/>
    </ligand>
</feature>
<feature type="binding site" evidence="1">
    <location>
        <position position="273"/>
    </location>
    <ligand>
        <name>dimethylallyl diphosphate</name>
        <dbReference type="ChEBI" id="CHEBI:57623"/>
    </ligand>
</feature>
<feature type="binding site" evidence="1">
    <location>
        <position position="273"/>
    </location>
    <ligand>
        <name>isopentenyl diphosphate</name>
        <dbReference type="ChEBI" id="CHEBI:128769"/>
    </ligand>
</feature>
<reference key="1">
    <citation type="submission" date="2005-09" db="EMBL/GenBank/DDBJ databases">
        <title>Complete sequence of chromosome 1 of Rhodobacter sphaeroides 2.4.1.</title>
        <authorList>
            <person name="Copeland A."/>
            <person name="Lucas S."/>
            <person name="Lapidus A."/>
            <person name="Barry K."/>
            <person name="Detter J.C."/>
            <person name="Glavina T."/>
            <person name="Hammon N."/>
            <person name="Israni S."/>
            <person name="Pitluck S."/>
            <person name="Richardson P."/>
            <person name="Mackenzie C."/>
            <person name="Choudhary M."/>
            <person name="Larimer F."/>
            <person name="Hauser L.J."/>
            <person name="Land M."/>
            <person name="Donohue T.J."/>
            <person name="Kaplan S."/>
        </authorList>
    </citation>
    <scope>NUCLEOTIDE SEQUENCE [LARGE SCALE GENOMIC DNA]</scope>
    <source>
        <strain>ATCC 17023 / DSM 158 / JCM 6121 / CCUG 31486 / LMG 2827 / NBRC 12203 / NCIMB 8253 / ATH 2.4.1.</strain>
    </source>
</reference>
<organism>
    <name type="scientific">Cereibacter sphaeroides (strain ATCC 17023 / DSM 158 / JCM 6121 / CCUG 31486 / LMG 2827 / NBRC 12203 / NCIMB 8253 / ATH 2.4.1.)</name>
    <name type="common">Rhodobacter sphaeroides</name>
    <dbReference type="NCBI Taxonomy" id="272943"/>
    <lineage>
        <taxon>Bacteria</taxon>
        <taxon>Pseudomonadati</taxon>
        <taxon>Pseudomonadota</taxon>
        <taxon>Alphaproteobacteria</taxon>
        <taxon>Rhodobacterales</taxon>
        <taxon>Paracoccaceae</taxon>
        <taxon>Cereibacter</taxon>
    </lineage>
</organism>
<dbReference type="EC" id="1.17.7.4" evidence="1"/>
<dbReference type="EMBL" id="CP000143">
    <property type="protein sequence ID" value="ABA77814.1"/>
    <property type="molecule type" value="Genomic_DNA"/>
</dbReference>
<dbReference type="RefSeq" id="WP_002722409.1">
    <property type="nucleotide sequence ID" value="NZ_CP030271.1"/>
</dbReference>
<dbReference type="RefSeq" id="YP_351715.1">
    <property type="nucleotide sequence ID" value="NC_007493.2"/>
</dbReference>
<dbReference type="SMR" id="Q3J5X0"/>
<dbReference type="STRING" id="272943.RSP_1666"/>
<dbReference type="EnsemblBacteria" id="ABA77814">
    <property type="protein sequence ID" value="ABA77814"/>
    <property type="gene ID" value="RSP_1666"/>
</dbReference>
<dbReference type="GeneID" id="3717932"/>
<dbReference type="KEGG" id="rsp:RSP_1666"/>
<dbReference type="PATRIC" id="fig|272943.9.peg.543"/>
<dbReference type="eggNOG" id="COG0761">
    <property type="taxonomic scope" value="Bacteria"/>
</dbReference>
<dbReference type="OrthoDB" id="9804068at2"/>
<dbReference type="PhylomeDB" id="Q3J5X0"/>
<dbReference type="UniPathway" id="UPA00056">
    <property type="reaction ID" value="UER00097"/>
</dbReference>
<dbReference type="UniPathway" id="UPA00059">
    <property type="reaction ID" value="UER00105"/>
</dbReference>
<dbReference type="Proteomes" id="UP000002703">
    <property type="component" value="Chromosome 1"/>
</dbReference>
<dbReference type="GO" id="GO:0051539">
    <property type="term" value="F:4 iron, 4 sulfur cluster binding"/>
    <property type="evidence" value="ECO:0007669"/>
    <property type="project" value="UniProtKB-UniRule"/>
</dbReference>
<dbReference type="GO" id="GO:0051745">
    <property type="term" value="F:4-hydroxy-3-methylbut-2-enyl diphosphate reductase activity"/>
    <property type="evidence" value="ECO:0007669"/>
    <property type="project" value="UniProtKB-UniRule"/>
</dbReference>
<dbReference type="GO" id="GO:0046872">
    <property type="term" value="F:metal ion binding"/>
    <property type="evidence" value="ECO:0007669"/>
    <property type="project" value="UniProtKB-KW"/>
</dbReference>
<dbReference type="GO" id="GO:0050992">
    <property type="term" value="P:dimethylallyl diphosphate biosynthetic process"/>
    <property type="evidence" value="ECO:0007669"/>
    <property type="project" value="UniProtKB-UniRule"/>
</dbReference>
<dbReference type="GO" id="GO:0019288">
    <property type="term" value="P:isopentenyl diphosphate biosynthetic process, methylerythritol 4-phosphate pathway"/>
    <property type="evidence" value="ECO:0007669"/>
    <property type="project" value="UniProtKB-UniRule"/>
</dbReference>
<dbReference type="GO" id="GO:0016114">
    <property type="term" value="P:terpenoid biosynthetic process"/>
    <property type="evidence" value="ECO:0007669"/>
    <property type="project" value="UniProtKB-UniRule"/>
</dbReference>
<dbReference type="CDD" id="cd13944">
    <property type="entry name" value="lytB_ispH"/>
    <property type="match status" value="1"/>
</dbReference>
<dbReference type="Gene3D" id="3.40.50.11270">
    <property type="match status" value="1"/>
</dbReference>
<dbReference type="Gene3D" id="3.40.1010.20">
    <property type="entry name" value="4-hydroxy-3-methylbut-2-enyl diphosphate reductase, catalytic domain"/>
    <property type="match status" value="2"/>
</dbReference>
<dbReference type="HAMAP" id="MF_00191">
    <property type="entry name" value="IspH"/>
    <property type="match status" value="1"/>
</dbReference>
<dbReference type="InterPro" id="IPR003451">
    <property type="entry name" value="LytB/IspH"/>
</dbReference>
<dbReference type="NCBIfam" id="TIGR00216">
    <property type="entry name" value="ispH_lytB"/>
    <property type="match status" value="1"/>
</dbReference>
<dbReference type="NCBIfam" id="NF002188">
    <property type="entry name" value="PRK01045.1-2"/>
    <property type="match status" value="1"/>
</dbReference>
<dbReference type="NCBIfam" id="NF002190">
    <property type="entry name" value="PRK01045.1-4"/>
    <property type="match status" value="1"/>
</dbReference>
<dbReference type="PANTHER" id="PTHR30426">
    <property type="entry name" value="4-HYDROXY-3-METHYLBUT-2-ENYL DIPHOSPHATE REDUCTASE"/>
    <property type="match status" value="1"/>
</dbReference>
<dbReference type="PANTHER" id="PTHR30426:SF0">
    <property type="entry name" value="4-HYDROXY-3-METHYLBUT-2-ENYL DIPHOSPHATE REDUCTASE"/>
    <property type="match status" value="1"/>
</dbReference>
<dbReference type="Pfam" id="PF02401">
    <property type="entry name" value="LYTB"/>
    <property type="match status" value="1"/>
</dbReference>